<name>GCY14_CAEEL</name>
<feature type="signal peptide" evidence="2">
    <location>
        <begin position="1"/>
        <end position="14"/>
    </location>
</feature>
<feature type="chain" id="PRO_0000433283" description="Receptor-type guanylate cyclase gcy-14" evidence="2">
    <location>
        <begin position="15"/>
        <end position="1111"/>
    </location>
</feature>
<feature type="topological domain" description="Extracellular" evidence="2">
    <location>
        <begin position="15"/>
        <end position="473"/>
    </location>
</feature>
<feature type="transmembrane region" description="Helical" evidence="2">
    <location>
        <begin position="474"/>
        <end position="494"/>
    </location>
</feature>
<feature type="topological domain" description="Cytoplasmic" evidence="2">
    <location>
        <begin position="495"/>
        <end position="1111"/>
    </location>
</feature>
<feature type="domain" description="Protein kinase" evidence="4">
    <location>
        <begin position="482"/>
        <end position="817"/>
    </location>
</feature>
<feature type="domain" description="Guanylate cyclase" evidence="3">
    <location>
        <begin position="875"/>
        <end position="1005"/>
    </location>
</feature>
<feature type="region of interest" description="Disordered" evidence="6">
    <location>
        <begin position="1061"/>
        <end position="1082"/>
    </location>
</feature>
<feature type="compositionally biased region" description="Basic and acidic residues" evidence="6">
    <location>
        <begin position="1065"/>
        <end position="1074"/>
    </location>
</feature>
<feature type="binding site" evidence="4">
    <location>
        <begin position="488"/>
        <end position="496"/>
    </location>
    <ligand>
        <name>ATP</name>
        <dbReference type="ChEBI" id="CHEBI:30616"/>
    </ligand>
</feature>
<feature type="binding site" evidence="4">
    <location>
        <position position="545"/>
    </location>
    <ligand>
        <name>ATP</name>
        <dbReference type="ChEBI" id="CHEBI:30616"/>
    </ligand>
</feature>
<feature type="site" description="Involved in sensing alkaline pH" evidence="8">
    <location>
        <position position="145"/>
    </location>
</feature>
<feature type="glycosylation site" description="N-linked (GlcNAc...) asparagine" evidence="5">
    <location>
        <position position="65"/>
    </location>
</feature>
<feature type="glycosylation site" description="N-linked (GlcNAc...) asparagine" evidence="5">
    <location>
        <position position="130"/>
    </location>
</feature>
<feature type="glycosylation site" description="N-linked (GlcNAc...) asparagine" evidence="5">
    <location>
        <position position="318"/>
    </location>
</feature>
<feature type="glycosylation site" description="N-linked (GlcNAc...) asparagine" evidence="5">
    <location>
        <position position="340"/>
    </location>
</feature>
<feature type="glycosylation site" description="N-linked (GlcNAc...) asparagine" evidence="5">
    <location>
        <position position="365"/>
    </location>
</feature>
<feature type="glycosylation site" description="N-linked (GlcNAc...) asparagine" evidence="5">
    <location>
        <position position="379"/>
    </location>
</feature>
<feature type="mutagenesis site" description="No effect on chemotaxis to alkaline pH. No effect on chemotaxis toward Na+. Normal cilium localization." evidence="8">
    <original>H</original>
    <variation>Q</variation>
    <location>
        <position position="57"/>
    </location>
</feature>
<feature type="mutagenesis site" description="No effect on chemotaxis to alkaline pH. No effect on chemotaxis toward Na+. Normal cilium localization." evidence="8">
    <original>H</original>
    <variation>Q</variation>
    <location>
        <position position="88"/>
    </location>
</feature>
<feature type="mutagenesis site" description="Loss of chemotaxis to alkaline pH. No effect on chemotaxis toward Na+. Normal cilium localization." evidence="8">
    <original>H</original>
    <variation>Q</variation>
    <location>
        <position position="145"/>
    </location>
</feature>
<feature type="mutagenesis site" description="No effect on chemotaxis to alkaline pH. No effect on chemotaxis toward Na+. Normal cilium localization." evidence="8">
    <original>H</original>
    <variation>Q</variation>
    <location>
        <position position="273"/>
    </location>
</feature>
<accession>Q23310</accession>
<accession>G1UJJ4</accession>
<reference evidence="10" key="1">
    <citation type="journal article" date="2013" name="Curr. Biol.">
        <title>Environmental alkalinity sensing mediated by the transmembrane guanylyl cyclase GCY-14 in C. elegans.</title>
        <authorList>
            <person name="Murayama T."/>
            <person name="Takayama J."/>
            <person name="Fujiwara M."/>
            <person name="Maruyama I.N."/>
        </authorList>
    </citation>
    <scope>NUCLEOTIDE SEQUENCE [MRNA]</scope>
    <scope>FUNCTION</scope>
    <scope>SUBUNIT</scope>
    <scope>SUBCELLULAR LOCATION</scope>
    <scope>TISSUE SPECIFICITY</scope>
    <scope>DOMAIN</scope>
    <scope>MUTAGENESIS OF HIS-57; HIS-88; HIS-145 AND HIS-273</scope>
</reference>
<reference evidence="11" key="2">
    <citation type="journal article" date="1998" name="Science">
        <title>Genome sequence of the nematode C. elegans: a platform for investigating biology.</title>
        <authorList>
            <consortium name="The C. elegans sequencing consortium"/>
        </authorList>
    </citation>
    <scope>NUCLEOTIDE SEQUENCE [LARGE SCALE GENOMIC DNA]</scope>
    <source>
        <strain evidence="11">Bristol N2</strain>
    </source>
</reference>
<reference evidence="9" key="3">
    <citation type="journal article" date="2009" name="Curr. Biol.">
        <title>Lateralized gustatory behavior of C. elegans is controlled by specific receptor-type guanylyl cyclases.</title>
        <authorList>
            <person name="Ortiz C.O."/>
            <person name="Faumont S."/>
            <person name="Takayama J."/>
            <person name="Ahmed H.K."/>
            <person name="Goldsmith A.D."/>
            <person name="Pocock R."/>
            <person name="McCormick K.E."/>
            <person name="Kunimoto H."/>
            <person name="Iino Y."/>
            <person name="Lockery S."/>
            <person name="Hobert O."/>
        </authorList>
    </citation>
    <scope>FUNCTION</scope>
</reference>
<keyword id="KW-0067">ATP-binding</keyword>
<keyword id="KW-1003">Cell membrane</keyword>
<keyword id="KW-0966">Cell projection</keyword>
<keyword id="KW-0141">cGMP biosynthesis</keyword>
<keyword id="KW-0145">Chemotaxis</keyword>
<keyword id="KW-0325">Glycoprotein</keyword>
<keyword id="KW-0342">GTP-binding</keyword>
<keyword id="KW-0456">Lyase</keyword>
<keyword id="KW-0472">Membrane</keyword>
<keyword id="KW-0547">Nucleotide-binding</keyword>
<keyword id="KW-0675">Receptor</keyword>
<keyword id="KW-1185">Reference proteome</keyword>
<keyword id="KW-0732">Signal</keyword>
<keyword id="KW-0812">Transmembrane</keyword>
<keyword id="KW-1133">Transmembrane helix</keyword>
<organism evidence="11">
    <name type="scientific">Caenorhabditis elegans</name>
    <dbReference type="NCBI Taxonomy" id="6239"/>
    <lineage>
        <taxon>Eukaryota</taxon>
        <taxon>Metazoa</taxon>
        <taxon>Ecdysozoa</taxon>
        <taxon>Nematoda</taxon>
        <taxon>Chromadorea</taxon>
        <taxon>Rhabditida</taxon>
        <taxon>Rhabditina</taxon>
        <taxon>Rhabditomorpha</taxon>
        <taxon>Rhabditoidea</taxon>
        <taxon>Rhabditidae</taxon>
        <taxon>Peloderinae</taxon>
        <taxon>Caenorhabditis</taxon>
    </lineage>
</organism>
<sequence>MCLFLLLFPYLASGQFLQTVKVGLLFSKDTASVMRAVGYRTSAAAVLVARDRIRAEHLLDQYDFNFTVKFDECTEGLAGGKTVELINHDNVDVIIGPTCNRAGIAVASLAAYYNVPVFQWGLTTAADIGNVSRYPTTVTLSLDTHSMALGVREVLRRFEWDEFVFIYSNDGDEEKCASMKDDLEKMGIENSDVTLAYMVQIQTVTLDALQKALTEVSKRGRIIIACFANGRGFKKAFVASTVLAGMSTDEYMYMFAEPQSRGFYVDEINGGEHYSWDDTDGNFVTGLTPEQIRDAYGKVLYICDNMGLPTTITPEFANFSSQLISRMTEQPFNCVQDCSNSTYKVPATYAGQLFDAFYAYGVALNRSLTQDPTRANLKNGSFVLSDIGMSFQGVGGGTVTLDDTGTRIVQVYMFALNTSLLPYLAASLVINGSEVEYTPFYKSEADLWSVRPLARPICGFSGLECPPDFVKEYLVYTIIAAVIVVLALLAGCAGLLYTMQMKRKEMERQDLLWQVPFIELQQVQSKSKAEASMHSFASGPSTSTKITVESRSETINFIFYYYQQDILAAMKHDLILQFDAEQKAEFRQMRNFDNDNLNKFIGLCLDGPQLFSLWRFCSRGSLSDVISKSSMQMDSFFMFSLIRDISNGLLFIHNSFLKCHGHLTSRCCLIDDRWQIKISGYGLKSVRTFENPKKEDLLWTPPENLRNENEERLPEGDIYSFGIICSEILTRSSAFDLENRKEKPDVIIYQVKKGGHNPMRPSLDTGETVEINPALLHLIRDCWTERPSERPSIEQVRGHLNGMRDGRKSNLMDHVFNMLETYASTLEEEVSDRTKELVEEKKKSDVLLYRMLPKMVADKLKLGQTVEPETFEQVTIFFSDVVQFTTLAGKCTPLQVVTLLNDLYTIFDGIIEQNDVYKVETIGDGYLCVSGLPHRNGNEHIRHIARMSLGFLSSLEFFRVQHLPSERINLRIGINCGSVVAGVVGLTMPRYCLFGDAVNTASRMESNGKPGKIHVTAEANQMLTQVVGGFRTESRGEVIIKGKGVMETYWLLGEQSRISVSAQAPREKTPEPPRRQSVRSISPIIEKMSEETQKGLYSAYKDFNNGNECVS</sequence>
<comment type="function">
    <text evidence="1 7 8">Guanylate cyclase involved in the production of the second messenger cGMP (By similarity). Regulates chemotaxis responses toward Na(1+) and Li(1+) salt ions and alkaline pH in ASE left (ASEL) sensory neuron. Directly senses environmental alkalinity in ASEL neuron which probably leads to the activation of cGMP-gated cation channel tax2/tax4 (PubMed:19523832, PubMed:23664973).</text>
</comment>
<comment type="catalytic activity">
    <reaction evidence="1">
        <text>GTP = 3',5'-cyclic GMP + diphosphate</text>
        <dbReference type="Rhea" id="RHEA:13665"/>
        <dbReference type="ChEBI" id="CHEBI:33019"/>
        <dbReference type="ChEBI" id="CHEBI:37565"/>
        <dbReference type="ChEBI" id="CHEBI:57746"/>
        <dbReference type="EC" id="4.6.1.2"/>
    </reaction>
</comment>
<comment type="subunit">
    <text evidence="8">Homodimer.</text>
</comment>
<comment type="subcellular location">
    <subcellularLocation>
        <location evidence="9">Cell membrane</location>
        <topology evidence="9">Single-pass type I membrane protein</topology>
    </subcellularLocation>
    <subcellularLocation>
        <location evidence="8">Cell projection</location>
        <location evidence="8">Cilium</location>
    </subcellularLocation>
    <text evidence="8">Localizes in cilium of ASEL sensory neurons.</text>
</comment>
<comment type="tissue specificity">
    <text evidence="8">Expressed asymmetrically in ASEL sensory neuron.</text>
</comment>
<comment type="domain">
    <text evidence="8">The extracellular domain is required for the direct sensing of alkaline pH.</text>
</comment>
<comment type="domain">
    <text evidence="4">The protein kinase domain is predicted to be catalytically inactive.</text>
</comment>
<comment type="similarity">
    <text evidence="3">Belongs to the adenylyl cyclase class-4/guanylyl cyclase family.</text>
</comment>
<comment type="sequence caution" evidence="9">
    <conflict type="erroneous initiation">
        <sequence resource="EMBL-CDS" id="BAK69482"/>
    </conflict>
    <text>Extended N-terminus.</text>
</comment>
<protein>
    <recommendedName>
        <fullName evidence="9">Receptor-type guanylate cyclase gcy-14</fullName>
        <ecNumber evidence="1">4.6.1.2</ecNumber>
    </recommendedName>
</protein>
<dbReference type="EC" id="4.6.1.2" evidence="1"/>
<dbReference type="EMBL" id="AB668394">
    <property type="protein sequence ID" value="BAK69482.1"/>
    <property type="status" value="ALT_INIT"/>
    <property type="molecule type" value="mRNA"/>
</dbReference>
<dbReference type="EMBL" id="BX284605">
    <property type="protein sequence ID" value="CAB01533.2"/>
    <property type="molecule type" value="Genomic_DNA"/>
</dbReference>
<dbReference type="PIR" id="T27564">
    <property type="entry name" value="T27564"/>
</dbReference>
<dbReference type="RefSeq" id="NP_506660.2">
    <property type="nucleotide sequence ID" value="NM_074259.5"/>
</dbReference>
<dbReference type="SMR" id="Q23310"/>
<dbReference type="FunCoup" id="Q23310">
    <property type="interactions" value="189"/>
</dbReference>
<dbReference type="STRING" id="6239.ZC412.2.1"/>
<dbReference type="GlyCosmos" id="Q23310">
    <property type="glycosylation" value="6 sites, No reported glycans"/>
</dbReference>
<dbReference type="PaxDb" id="6239-ZC412.2"/>
<dbReference type="EnsemblMetazoa" id="ZC412.2.1">
    <property type="protein sequence ID" value="ZC412.2.1"/>
    <property type="gene ID" value="WBGene00001540"/>
</dbReference>
<dbReference type="GeneID" id="191647"/>
<dbReference type="KEGG" id="cel:CELE_ZC412.2"/>
<dbReference type="UCSC" id="ZC412.2">
    <property type="organism name" value="c. elegans"/>
</dbReference>
<dbReference type="AGR" id="WB:WBGene00001540"/>
<dbReference type="CTD" id="191647"/>
<dbReference type="WormBase" id="ZC412.2">
    <property type="protein sequence ID" value="CE48405"/>
    <property type="gene ID" value="WBGene00001540"/>
    <property type="gene designation" value="gcy-14"/>
</dbReference>
<dbReference type="eggNOG" id="KOG1023">
    <property type="taxonomic scope" value="Eukaryota"/>
</dbReference>
<dbReference type="GeneTree" id="ENSGT00970000196659"/>
<dbReference type="HOGENOM" id="CLU_001072_1_3_1"/>
<dbReference type="InParanoid" id="Q23310"/>
<dbReference type="OMA" id="CPPDFVK"/>
<dbReference type="OrthoDB" id="302535at2759"/>
<dbReference type="Reactome" id="R-CEL-2514859">
    <property type="pathway name" value="Inactivation, recovery and regulation of the phototransduction cascade"/>
</dbReference>
<dbReference type="PRO" id="PR:Q23310"/>
<dbReference type="Proteomes" id="UP000001940">
    <property type="component" value="Chromosome V"/>
</dbReference>
<dbReference type="Bgee" id="WBGene00001540">
    <property type="expression patterns" value="Expressed in larva"/>
</dbReference>
<dbReference type="GO" id="GO:0005929">
    <property type="term" value="C:cilium"/>
    <property type="evidence" value="ECO:0007669"/>
    <property type="project" value="UniProtKB-SubCell"/>
</dbReference>
<dbReference type="GO" id="GO:0005886">
    <property type="term" value="C:plasma membrane"/>
    <property type="evidence" value="ECO:0000318"/>
    <property type="project" value="GO_Central"/>
</dbReference>
<dbReference type="GO" id="GO:0005524">
    <property type="term" value="F:ATP binding"/>
    <property type="evidence" value="ECO:0007669"/>
    <property type="project" value="UniProtKB-KW"/>
</dbReference>
<dbReference type="GO" id="GO:0005525">
    <property type="term" value="F:GTP binding"/>
    <property type="evidence" value="ECO:0007669"/>
    <property type="project" value="UniProtKB-KW"/>
</dbReference>
<dbReference type="GO" id="GO:0004383">
    <property type="term" value="F:guanylate cyclase activity"/>
    <property type="evidence" value="ECO:0000318"/>
    <property type="project" value="GO_Central"/>
</dbReference>
<dbReference type="GO" id="GO:0042802">
    <property type="term" value="F:identical protein binding"/>
    <property type="evidence" value="ECO:0000314"/>
    <property type="project" value="UniProtKB"/>
</dbReference>
<dbReference type="GO" id="GO:0001653">
    <property type="term" value="F:peptide receptor activity"/>
    <property type="evidence" value="ECO:0000318"/>
    <property type="project" value="GO_Central"/>
</dbReference>
<dbReference type="GO" id="GO:0004672">
    <property type="term" value="F:protein kinase activity"/>
    <property type="evidence" value="ECO:0007669"/>
    <property type="project" value="InterPro"/>
</dbReference>
<dbReference type="GO" id="GO:0006182">
    <property type="term" value="P:cGMP biosynthetic process"/>
    <property type="evidence" value="ECO:0000318"/>
    <property type="project" value="GO_Central"/>
</dbReference>
<dbReference type="GO" id="GO:0007635">
    <property type="term" value="P:chemosensory behavior"/>
    <property type="evidence" value="ECO:0000315"/>
    <property type="project" value="UniProtKB"/>
</dbReference>
<dbReference type="GO" id="GO:0006935">
    <property type="term" value="P:chemotaxis"/>
    <property type="evidence" value="ECO:0000315"/>
    <property type="project" value="UniProtKB"/>
</dbReference>
<dbReference type="GO" id="GO:0035556">
    <property type="term" value="P:intracellular signal transduction"/>
    <property type="evidence" value="ECO:0007669"/>
    <property type="project" value="InterPro"/>
</dbReference>
<dbReference type="GO" id="GO:0007168">
    <property type="term" value="P:receptor guanylyl cyclase signaling pathway"/>
    <property type="evidence" value="ECO:0000318"/>
    <property type="project" value="GO_Central"/>
</dbReference>
<dbReference type="GO" id="GO:0010446">
    <property type="term" value="P:response to alkaline pH"/>
    <property type="evidence" value="ECO:0000315"/>
    <property type="project" value="UniProtKB"/>
</dbReference>
<dbReference type="GO" id="GO:0010226">
    <property type="term" value="P:response to lithium ion"/>
    <property type="evidence" value="ECO:0000315"/>
    <property type="project" value="UniProtKB"/>
</dbReference>
<dbReference type="GO" id="GO:1902074">
    <property type="term" value="P:response to salt"/>
    <property type="evidence" value="ECO:0000315"/>
    <property type="project" value="UniProtKB"/>
</dbReference>
<dbReference type="CDD" id="cd07302">
    <property type="entry name" value="CHD"/>
    <property type="match status" value="1"/>
</dbReference>
<dbReference type="CDD" id="cd06352">
    <property type="entry name" value="PBP1_NPR_GC-like"/>
    <property type="match status" value="1"/>
</dbReference>
<dbReference type="FunFam" id="1.10.510.10:FF:000704">
    <property type="entry name" value="Guanylate cyclase"/>
    <property type="match status" value="1"/>
</dbReference>
<dbReference type="FunFam" id="3.30.70.1230:FF:000023">
    <property type="entry name" value="Guanylate cyclase"/>
    <property type="match status" value="1"/>
</dbReference>
<dbReference type="FunFam" id="3.40.50.2300:FF:000241">
    <property type="entry name" value="Guanylate cyclase"/>
    <property type="match status" value="1"/>
</dbReference>
<dbReference type="FunFam" id="3.40.50.2300:FF:000547">
    <property type="entry name" value="Guanylate cyclase"/>
    <property type="match status" value="1"/>
</dbReference>
<dbReference type="Gene3D" id="3.40.50.2300">
    <property type="match status" value="2"/>
</dbReference>
<dbReference type="Gene3D" id="6.10.250.780">
    <property type="match status" value="1"/>
</dbReference>
<dbReference type="Gene3D" id="3.30.70.1230">
    <property type="entry name" value="Nucleotide cyclase"/>
    <property type="match status" value="1"/>
</dbReference>
<dbReference type="Gene3D" id="1.10.510.10">
    <property type="entry name" value="Transferase(Phosphotransferase) domain 1"/>
    <property type="match status" value="1"/>
</dbReference>
<dbReference type="InterPro" id="IPR001054">
    <property type="entry name" value="A/G_cyclase"/>
</dbReference>
<dbReference type="InterPro" id="IPR018297">
    <property type="entry name" value="A/G_cyclase_CS"/>
</dbReference>
<dbReference type="InterPro" id="IPR001828">
    <property type="entry name" value="ANF_lig-bd_rcpt"/>
</dbReference>
<dbReference type="InterPro" id="IPR050401">
    <property type="entry name" value="Cyclic_nucleotide_synthase"/>
</dbReference>
<dbReference type="InterPro" id="IPR011009">
    <property type="entry name" value="Kinase-like_dom_sf"/>
</dbReference>
<dbReference type="InterPro" id="IPR029787">
    <property type="entry name" value="Nucleotide_cyclase"/>
</dbReference>
<dbReference type="InterPro" id="IPR028082">
    <property type="entry name" value="Peripla_BP_I"/>
</dbReference>
<dbReference type="InterPro" id="IPR000719">
    <property type="entry name" value="Prot_kinase_dom"/>
</dbReference>
<dbReference type="InterPro" id="IPR001245">
    <property type="entry name" value="Ser-Thr/Tyr_kinase_cat_dom"/>
</dbReference>
<dbReference type="PANTHER" id="PTHR11920">
    <property type="entry name" value="GUANYLYL CYCLASE"/>
    <property type="match status" value="1"/>
</dbReference>
<dbReference type="PANTHER" id="PTHR11920:SF40">
    <property type="entry name" value="RECEPTOR-TYPE GUANYLATE CYCLASE GCY-14-RELATED"/>
    <property type="match status" value="1"/>
</dbReference>
<dbReference type="Pfam" id="PF01094">
    <property type="entry name" value="ANF_receptor"/>
    <property type="match status" value="1"/>
</dbReference>
<dbReference type="Pfam" id="PF00211">
    <property type="entry name" value="Guanylate_cyc"/>
    <property type="match status" value="1"/>
</dbReference>
<dbReference type="Pfam" id="PF07714">
    <property type="entry name" value="PK_Tyr_Ser-Thr"/>
    <property type="match status" value="1"/>
</dbReference>
<dbReference type="SMART" id="SM00044">
    <property type="entry name" value="CYCc"/>
    <property type="match status" value="1"/>
</dbReference>
<dbReference type="SUPFAM" id="SSF55073">
    <property type="entry name" value="Nucleotide cyclase"/>
    <property type="match status" value="1"/>
</dbReference>
<dbReference type="SUPFAM" id="SSF53822">
    <property type="entry name" value="Periplasmic binding protein-like I"/>
    <property type="match status" value="1"/>
</dbReference>
<dbReference type="SUPFAM" id="SSF56112">
    <property type="entry name" value="Protein kinase-like (PK-like)"/>
    <property type="match status" value="1"/>
</dbReference>
<dbReference type="PROSITE" id="PS00452">
    <property type="entry name" value="GUANYLATE_CYCLASE_1"/>
    <property type="match status" value="1"/>
</dbReference>
<dbReference type="PROSITE" id="PS50125">
    <property type="entry name" value="GUANYLATE_CYCLASE_2"/>
    <property type="match status" value="1"/>
</dbReference>
<dbReference type="PROSITE" id="PS50011">
    <property type="entry name" value="PROTEIN_KINASE_DOM"/>
    <property type="match status" value="1"/>
</dbReference>
<gene>
    <name evidence="12" type="primary">gcy-14</name>
    <name evidence="12" type="ORF">ZC412.2</name>
</gene>
<proteinExistence type="evidence at protein level"/>
<evidence type="ECO:0000250" key="1">
    <source>
        <dbReference type="UniProtKB" id="Q19187"/>
    </source>
</evidence>
<evidence type="ECO:0000255" key="2"/>
<evidence type="ECO:0000255" key="3">
    <source>
        <dbReference type="PROSITE-ProRule" id="PRU00099"/>
    </source>
</evidence>
<evidence type="ECO:0000255" key="4">
    <source>
        <dbReference type="PROSITE-ProRule" id="PRU00159"/>
    </source>
</evidence>
<evidence type="ECO:0000255" key="5">
    <source>
        <dbReference type="PROSITE-ProRule" id="PRU00498"/>
    </source>
</evidence>
<evidence type="ECO:0000256" key="6">
    <source>
        <dbReference type="SAM" id="MobiDB-lite"/>
    </source>
</evidence>
<evidence type="ECO:0000269" key="7">
    <source>
    </source>
</evidence>
<evidence type="ECO:0000269" key="8">
    <source>
    </source>
</evidence>
<evidence type="ECO:0000305" key="9"/>
<evidence type="ECO:0000312" key="10">
    <source>
        <dbReference type="EMBL" id="BAK69482.1"/>
    </source>
</evidence>
<evidence type="ECO:0000312" key="11">
    <source>
        <dbReference type="Proteomes" id="UP000001940"/>
    </source>
</evidence>
<evidence type="ECO:0000312" key="12">
    <source>
        <dbReference type="WormBase" id="ZC412.2"/>
    </source>
</evidence>